<accession>Q9EPH8</accession>
<dbReference type="EMBL" id="AJ298278">
    <property type="protein sequence ID" value="CAC21554.1"/>
    <property type="molecule type" value="mRNA"/>
</dbReference>
<dbReference type="EMBL" id="BC083176">
    <property type="protein sequence ID" value="AAH83176.1"/>
    <property type="molecule type" value="mRNA"/>
</dbReference>
<dbReference type="RefSeq" id="NP_599180.1">
    <property type="nucleotide sequence ID" value="NM_134353.3"/>
</dbReference>
<dbReference type="SMR" id="Q9EPH8"/>
<dbReference type="BioGRID" id="251195">
    <property type="interactions" value="13"/>
</dbReference>
<dbReference type="CORUM" id="Q9EPH8"/>
<dbReference type="FunCoup" id="Q9EPH8">
    <property type="interactions" value="4295"/>
</dbReference>
<dbReference type="IntAct" id="Q9EPH8">
    <property type="interactions" value="10"/>
</dbReference>
<dbReference type="MINT" id="Q9EPH8"/>
<dbReference type="STRING" id="10116.ENSRNOP00000012775"/>
<dbReference type="GlyGen" id="Q9EPH8">
    <property type="glycosylation" value="2 sites, 1 O-linked glycan (1 site)"/>
</dbReference>
<dbReference type="iPTMnet" id="Q9EPH8"/>
<dbReference type="PhosphoSitePlus" id="Q9EPH8"/>
<dbReference type="jPOST" id="Q9EPH8"/>
<dbReference type="PaxDb" id="10116-ENSRNOP00000012775"/>
<dbReference type="Ensembl" id="ENSRNOT00000012775.8">
    <property type="protein sequence ID" value="ENSRNOP00000012775.5"/>
    <property type="gene ID" value="ENSRNOG00000008639.8"/>
</dbReference>
<dbReference type="GeneID" id="171350"/>
<dbReference type="KEGG" id="rno:171350"/>
<dbReference type="UCSC" id="RGD:619838">
    <property type="organism name" value="rat"/>
</dbReference>
<dbReference type="AGR" id="RGD:619838"/>
<dbReference type="CTD" id="26986"/>
<dbReference type="RGD" id="619838">
    <property type="gene designation" value="Pabpc1"/>
</dbReference>
<dbReference type="eggNOG" id="KOG0123">
    <property type="taxonomic scope" value="Eukaryota"/>
</dbReference>
<dbReference type="GeneTree" id="ENSGT00940000153773"/>
<dbReference type="HOGENOM" id="CLU_012062_22_2_1"/>
<dbReference type="InParanoid" id="Q9EPH8"/>
<dbReference type="OrthoDB" id="19742at2759"/>
<dbReference type="PhylomeDB" id="Q9EPH8"/>
<dbReference type="TreeFam" id="TF300458"/>
<dbReference type="Reactome" id="R-RNO-156827">
    <property type="pathway name" value="L13a-mediated translational silencing of Ceruloplasmin expression"/>
</dbReference>
<dbReference type="Reactome" id="R-RNO-429947">
    <property type="pathway name" value="Deadenylation of mRNA"/>
</dbReference>
<dbReference type="Reactome" id="R-RNO-450408">
    <property type="pathway name" value="AUF1 (hnRNP D0) binds and destabilizes mRNA"/>
</dbReference>
<dbReference type="Reactome" id="R-RNO-72649">
    <property type="pathway name" value="Translation initiation complex formation"/>
</dbReference>
<dbReference type="Reactome" id="R-RNO-975956">
    <property type="pathway name" value="Nonsense Mediated Decay (NMD) independent of the Exon Junction Complex (EJC)"/>
</dbReference>
<dbReference type="Reactome" id="R-RNO-975957">
    <property type="pathway name" value="Nonsense Mediated Decay (NMD) enhanced by the Exon Junction Complex (EJC)"/>
</dbReference>
<dbReference type="CD-CODE" id="B2E8AD81">
    <property type="entry name" value="Stress granule"/>
</dbReference>
<dbReference type="PRO" id="PR:Q9EPH8"/>
<dbReference type="Proteomes" id="UP000002494">
    <property type="component" value="Chromosome 7"/>
</dbReference>
<dbReference type="Bgee" id="ENSRNOG00000008639">
    <property type="expression patterns" value="Expressed in testis and 19 other cell types or tissues"/>
</dbReference>
<dbReference type="ExpressionAtlas" id="Q9EPH8">
    <property type="expression patterns" value="baseline and differential"/>
</dbReference>
<dbReference type="GO" id="GO:0071013">
    <property type="term" value="C:catalytic step 2 spliceosome"/>
    <property type="evidence" value="ECO:0000266"/>
    <property type="project" value="RGD"/>
</dbReference>
<dbReference type="GO" id="GO:0031252">
    <property type="term" value="C:cell leading edge"/>
    <property type="evidence" value="ECO:0000250"/>
    <property type="project" value="UniProtKB"/>
</dbReference>
<dbReference type="GO" id="GO:0005737">
    <property type="term" value="C:cytoplasm"/>
    <property type="evidence" value="ECO:0000250"/>
    <property type="project" value="UniProtKB"/>
</dbReference>
<dbReference type="GO" id="GO:0036464">
    <property type="term" value="C:cytoplasmic ribonucleoprotein granule"/>
    <property type="evidence" value="ECO:0000266"/>
    <property type="project" value="RGD"/>
</dbReference>
<dbReference type="GO" id="GO:0010494">
    <property type="term" value="C:cytoplasmic stress granule"/>
    <property type="evidence" value="ECO:0000250"/>
    <property type="project" value="UniProtKB"/>
</dbReference>
<dbReference type="GO" id="GO:0005829">
    <property type="term" value="C:cytosol"/>
    <property type="evidence" value="ECO:0000266"/>
    <property type="project" value="RGD"/>
</dbReference>
<dbReference type="GO" id="GO:0030425">
    <property type="term" value="C:dendrite"/>
    <property type="evidence" value="ECO:0000314"/>
    <property type="project" value="RGD"/>
</dbReference>
<dbReference type="GO" id="GO:0030027">
    <property type="term" value="C:lamellipodium"/>
    <property type="evidence" value="ECO:0007669"/>
    <property type="project" value="UniProtKB-SubCell"/>
</dbReference>
<dbReference type="GO" id="GO:0106002">
    <property type="term" value="C:mCRD-mediated mRNA stability complex"/>
    <property type="evidence" value="ECO:0000266"/>
    <property type="project" value="RGD"/>
</dbReference>
<dbReference type="GO" id="GO:0005634">
    <property type="term" value="C:nucleus"/>
    <property type="evidence" value="ECO:0000266"/>
    <property type="project" value="RGD"/>
</dbReference>
<dbReference type="GO" id="GO:0032991">
    <property type="term" value="C:protein-containing complex"/>
    <property type="evidence" value="ECO:0000314"/>
    <property type="project" value="RGD"/>
</dbReference>
<dbReference type="GO" id="GO:1990904">
    <property type="term" value="C:ribonucleoprotein complex"/>
    <property type="evidence" value="ECO:0000250"/>
    <property type="project" value="UniProtKB"/>
</dbReference>
<dbReference type="GO" id="GO:0045202">
    <property type="term" value="C:synapse"/>
    <property type="evidence" value="ECO:0000266"/>
    <property type="project" value="RGD"/>
</dbReference>
<dbReference type="GO" id="GO:0003730">
    <property type="term" value="F:mRNA 3'-UTR binding"/>
    <property type="evidence" value="ECO:0000266"/>
    <property type="project" value="RGD"/>
</dbReference>
<dbReference type="GO" id="GO:0003729">
    <property type="term" value="F:mRNA binding"/>
    <property type="evidence" value="ECO:0000314"/>
    <property type="project" value="RGD"/>
</dbReference>
<dbReference type="GO" id="GO:0008143">
    <property type="term" value="F:poly(A) binding"/>
    <property type="evidence" value="ECO:0000250"/>
    <property type="project" value="UniProtKB"/>
</dbReference>
<dbReference type="GO" id="GO:0008266">
    <property type="term" value="F:poly(U) RNA binding"/>
    <property type="evidence" value="ECO:0000266"/>
    <property type="project" value="RGD"/>
</dbReference>
<dbReference type="GO" id="GO:0003723">
    <property type="term" value="F:RNA binding"/>
    <property type="evidence" value="ECO:0000266"/>
    <property type="project" value="RGD"/>
</dbReference>
<dbReference type="GO" id="GO:0070934">
    <property type="term" value="P:CRD-mediated mRNA stabilization"/>
    <property type="evidence" value="ECO:0000266"/>
    <property type="project" value="RGD"/>
</dbReference>
<dbReference type="GO" id="GO:0006397">
    <property type="term" value="P:mRNA processing"/>
    <property type="evidence" value="ECO:0007669"/>
    <property type="project" value="UniProtKB-KW"/>
</dbReference>
<dbReference type="GO" id="GO:1900152">
    <property type="term" value="P:negative regulation of nuclear-transcribed mRNA catabolic process, deadenylation-dependent decay"/>
    <property type="evidence" value="ECO:0000266"/>
    <property type="project" value="RGD"/>
</dbReference>
<dbReference type="GO" id="GO:2000623">
    <property type="term" value="P:negative regulation of nuclear-transcribed mRNA catabolic process, nonsense-mediated decay"/>
    <property type="evidence" value="ECO:0000250"/>
    <property type="project" value="UniProtKB"/>
</dbReference>
<dbReference type="GO" id="GO:0000184">
    <property type="term" value="P:nuclear-transcribed mRNA catabolic process, nonsense-mediated decay"/>
    <property type="evidence" value="ECO:0007669"/>
    <property type="project" value="UniProtKB-KW"/>
</dbReference>
<dbReference type="GO" id="GO:2000767">
    <property type="term" value="P:positive regulation of cytoplasmic translation"/>
    <property type="evidence" value="ECO:0000266"/>
    <property type="project" value="RGD"/>
</dbReference>
<dbReference type="GO" id="GO:1900153">
    <property type="term" value="P:positive regulation of nuclear-transcribed mRNA catabolic process, deadenylation-dependent decay"/>
    <property type="evidence" value="ECO:0000250"/>
    <property type="project" value="UniProtKB"/>
</dbReference>
<dbReference type="GO" id="GO:0060213">
    <property type="term" value="P:positive regulation of nuclear-transcribed mRNA poly(A) tail shortening"/>
    <property type="evidence" value="ECO:0000250"/>
    <property type="project" value="UniProtKB"/>
</dbReference>
<dbReference type="GO" id="GO:0045070">
    <property type="term" value="P:positive regulation of viral genome replication"/>
    <property type="evidence" value="ECO:0000266"/>
    <property type="project" value="RGD"/>
</dbReference>
<dbReference type="GO" id="GO:0031047">
    <property type="term" value="P:regulatory ncRNA-mediated gene silencing"/>
    <property type="evidence" value="ECO:0000250"/>
    <property type="project" value="UniProtKB"/>
</dbReference>
<dbReference type="GO" id="GO:0008380">
    <property type="term" value="P:RNA splicing"/>
    <property type="evidence" value="ECO:0007669"/>
    <property type="project" value="UniProtKB-KW"/>
</dbReference>
<dbReference type="CDD" id="cd12378">
    <property type="entry name" value="RRM1_I_PABPs"/>
    <property type="match status" value="1"/>
</dbReference>
<dbReference type="CDD" id="cd12379">
    <property type="entry name" value="RRM2_I_PABPs"/>
    <property type="match status" value="1"/>
</dbReference>
<dbReference type="CDD" id="cd12380">
    <property type="entry name" value="RRM3_I_PABPs"/>
    <property type="match status" value="1"/>
</dbReference>
<dbReference type="CDD" id="cd12381">
    <property type="entry name" value="RRM4_I_PABPs"/>
    <property type="match status" value="1"/>
</dbReference>
<dbReference type="FunFam" id="1.10.1900.10:FF:000001">
    <property type="entry name" value="Polyadenylate-binding protein"/>
    <property type="match status" value="1"/>
</dbReference>
<dbReference type="FunFam" id="3.30.70.330:FF:000003">
    <property type="entry name" value="Polyadenylate-binding protein"/>
    <property type="match status" value="1"/>
</dbReference>
<dbReference type="FunFam" id="3.30.70.330:FF:000021">
    <property type="entry name" value="Polyadenylate-binding protein"/>
    <property type="match status" value="1"/>
</dbReference>
<dbReference type="FunFam" id="3.30.70.330:FF:000042">
    <property type="entry name" value="Polyadenylate-binding protein"/>
    <property type="match status" value="1"/>
</dbReference>
<dbReference type="FunFam" id="3.30.70.330:FF:000154">
    <property type="entry name" value="Polyadenylate-binding protein"/>
    <property type="match status" value="1"/>
</dbReference>
<dbReference type="Gene3D" id="3.30.70.330">
    <property type="match status" value="4"/>
</dbReference>
<dbReference type="Gene3D" id="1.10.1900.10">
    <property type="entry name" value="c-terminal domain of poly(a) binding protein"/>
    <property type="match status" value="1"/>
</dbReference>
<dbReference type="InterPro" id="IPR012677">
    <property type="entry name" value="Nucleotide-bd_a/b_plait_sf"/>
</dbReference>
<dbReference type="InterPro" id="IPR036053">
    <property type="entry name" value="PABP-dom"/>
</dbReference>
<dbReference type="InterPro" id="IPR006515">
    <property type="entry name" value="PABP_1234"/>
</dbReference>
<dbReference type="InterPro" id="IPR002004">
    <property type="entry name" value="PABP_HYD_C"/>
</dbReference>
<dbReference type="InterPro" id="IPR034364">
    <property type="entry name" value="PABP_RRM1"/>
</dbReference>
<dbReference type="InterPro" id="IPR035979">
    <property type="entry name" value="RBD_domain_sf"/>
</dbReference>
<dbReference type="InterPro" id="IPR045305">
    <property type="entry name" value="RRM2_I_PABPs"/>
</dbReference>
<dbReference type="InterPro" id="IPR000504">
    <property type="entry name" value="RRM_dom"/>
</dbReference>
<dbReference type="InterPro" id="IPR003954">
    <property type="entry name" value="RRM_dom_euk"/>
</dbReference>
<dbReference type="NCBIfam" id="TIGR01628">
    <property type="entry name" value="PABP-1234"/>
    <property type="match status" value="1"/>
</dbReference>
<dbReference type="PANTHER" id="PTHR24012">
    <property type="entry name" value="RNA BINDING PROTEIN"/>
    <property type="match status" value="1"/>
</dbReference>
<dbReference type="Pfam" id="PF00658">
    <property type="entry name" value="MLLE"/>
    <property type="match status" value="1"/>
</dbReference>
<dbReference type="Pfam" id="PF00076">
    <property type="entry name" value="RRM_1"/>
    <property type="match status" value="4"/>
</dbReference>
<dbReference type="SMART" id="SM00517">
    <property type="entry name" value="PolyA"/>
    <property type="match status" value="1"/>
</dbReference>
<dbReference type="SMART" id="SM00360">
    <property type="entry name" value="RRM"/>
    <property type="match status" value="4"/>
</dbReference>
<dbReference type="SMART" id="SM00361">
    <property type="entry name" value="RRM_1"/>
    <property type="match status" value="3"/>
</dbReference>
<dbReference type="SUPFAM" id="SSF63570">
    <property type="entry name" value="PABC (PABP) domain"/>
    <property type="match status" value="1"/>
</dbReference>
<dbReference type="SUPFAM" id="SSF54928">
    <property type="entry name" value="RNA-binding domain, RBD"/>
    <property type="match status" value="2"/>
</dbReference>
<dbReference type="PROSITE" id="PS51309">
    <property type="entry name" value="PABC"/>
    <property type="match status" value="1"/>
</dbReference>
<dbReference type="PROSITE" id="PS50102">
    <property type="entry name" value="RRM"/>
    <property type="match status" value="4"/>
</dbReference>
<evidence type="ECO:0000250" key="1"/>
<evidence type="ECO:0000250" key="2">
    <source>
        <dbReference type="UniProtKB" id="P11940"/>
    </source>
</evidence>
<evidence type="ECO:0000250" key="3">
    <source>
        <dbReference type="UniProtKB" id="P29341"/>
    </source>
</evidence>
<evidence type="ECO:0000255" key="4">
    <source>
        <dbReference type="PROSITE-ProRule" id="PRU00176"/>
    </source>
</evidence>
<evidence type="ECO:0000255" key="5">
    <source>
        <dbReference type="PROSITE-ProRule" id="PRU00641"/>
    </source>
</evidence>
<evidence type="ECO:0000305" key="6"/>
<comment type="function">
    <text evidence="2">Binds the poly(A) tail of mRNA, including that of its own transcript, and regulates processes of mRNA metabolism such as pre-mRNA splicing and mRNA stability. Its function in translational initiation regulation can either be enhanced by PAIP1 or repressed by PAIP2. Can probably bind to cytoplasmic RNA sequences other than poly(A) in vivo. Binds to N6-methyladenosine (m6A)-containing mRNAs and contributes to MYC stability by binding to m6A-containing MYC mRNAs. Involved in translationally coupled mRNA turnover. Implicated with other RNA-binding proteins in the cytoplasmic deadenylation/translational and decay interplay of the FOS mRNA mediated by the major coding-region determinant of instability (mCRD) domain. Involved in regulation of nonsense-mediated decay (NMD) of mRNAs containing premature stop codons; for the recognition of premature termination codons (PTC) and initiation of NMD a competitive interaction between UPF1 and PABPC1 with the ribosome-bound release factors is proposed. By binding to long poly(A) tails, may protect them from uridylation by ZCCHC6/ZCCHC11 and hence contribute to mRNA stability.</text>
</comment>
<comment type="subunit">
    <text evidence="2 3">May form homodimers. Component of a multisubunit autoregulatory ribonucleoprotein complex (ARC), at least composed of IGF2BP1, PABPC1 and CSDE1. Directly interacts with IGF2BP1. Part of a complex associated with the FOS mCRD domain and consisting of HNRPD, SYNCRIP, PAIP1 and CSDE1/UNR. Interacts with PAIP1 and PAIP2 (via the PABPC1-interacting motifs PAM1 and PAM2). Interacts with PAIP1 with a 1:1 stoichiometry and with PAIP2 with a 1:2 stoichiometry. The interaction with CSDE1 is direct and RNA-independent (By similarity). Found in a mRNP complex with YBX2. Interacts with TENT2/GLD2 (By similarity). Identified in the spliceosome C complex. Identified in a mRNP complex, at least composed of DHX9, DDX3X, ELAVL1, HNRNPU, IGF2BP1, ILF3, PABPC1, PCBP2, PTBP2, STAU1, STAU2, SYNCRIP and YBX1. The interaction with DDX3X is direct and RNA-independent. This interaction increases in stressed cells and decreases during cell recovery. Identified in a IGF2BP1-dependent mRNP granule complex containing untranslated mRNAs. Interacts with NXF1/TAP (By similarity). Interacts with PIWIL1 (By similarity). Interacts with AGO1, AGO2, GSPT1 and GSPT2. Interacts with LARP4B. Interacts (via the second and third RRM domains and the C-terminus) with PAIP2B (via central acidic portion and C-terminus). Forms a complex with LARP1 and SHFL. Interacts with LARP4. Interacts with ZFC3H1 in a RNase-sensitive manner. Interacts with TRIM71 (via NHL repeats) in an RNA-dependent manner. Interacts with TENT5C; the interaction has no effect on TENT5C poly(A) polymerase function. Interacts with G3BP1 and G3BP2 (By similarity). Interacts with ENDOV; the interaction is RNA-dependent and stimulates ENDOV activity (By similarity). Interacts with UPF1; the interaction is RNA-dependent (By similarity). Interacts with IGF2BP2 and IGF2BP3. May interact with SETX. Interacts with RBM46. Interacts with PAN3 isoform 1/Pan3L and isoform 3/Pan3S (via N-terminus); interaction with isoform 1 is less efficient than with isoform 3 (By similarity).</text>
</comment>
<comment type="interaction">
    <interactant intactId="EBI-919825">
        <id>Q9EPH8</id>
    </interactant>
    <interactant intactId="EBI-520230">
        <id>P35570</id>
        <label>Irs1</label>
    </interactant>
    <organismsDiffer>false</organismsDiffer>
    <experiments>2</experiments>
</comment>
<comment type="subcellular location">
    <subcellularLocation>
        <location evidence="2">Cytoplasm</location>
    </subcellularLocation>
    <subcellularLocation>
        <location evidence="2">Cytoplasm</location>
        <location evidence="2">Stress granule</location>
    </subcellularLocation>
    <subcellularLocation>
        <location evidence="2">Nucleus</location>
    </subcellularLocation>
    <subcellularLocation>
        <location evidence="2">Cell projection</location>
        <location evidence="2">Lamellipodium</location>
    </subcellularLocation>
    <text evidence="2">Localized in cytoplasmic mRNP granules containing untranslated mRNAs (By similarity). Shuttles between the cytoplasm and the nucleus (By similarity). During stress and in the absence of DDX3X, localizes to the nucleus (By similarity). At the leading edge of migrating fibroblasts, colocalizes with DDX3X (By similarity). Relocalizes to cytoplasmic stress granules upon cellular stress where it colocalizes with ENDOV (By similarity).</text>
</comment>
<comment type="domain">
    <text evidence="2">The RNA-binding domains RRM1 and RRM2 and the C-terminus (last 138 amino acids) regions interact respectively with the PABPC1-interacting motif-1 (PAM1) and -2 (PAM2) of PAIP1, respectively.</text>
</comment>
<comment type="domain">
    <text evidence="2">The RNA-binding domains RRM2 and RRM3 and the C-terminus (last 138 amino acids) regions interact with the PABPC1-interacting motif-1 (PAM1) and -2 (PAM2) of PAIP2, respectively.</text>
</comment>
<comment type="PTM">
    <text evidence="2">Phosphorylated by MAPKAPK2.</text>
</comment>
<comment type="PTM">
    <text evidence="2">Methylated by CARM1. Arg-493 is dimethylated, probably to asymmetric dimethylarginine (By similarity).</text>
</comment>
<comment type="similarity">
    <text evidence="6">Belongs to the polyadenylate-binding protein type-1 family.</text>
</comment>
<reference key="1">
    <citation type="journal article" date="2001" name="Proc. Natl. Acad. Sci. U.S.A.">
        <title>Vasopressin mRNA localization in nerve cells: characterization of cis-acting elements and trans-acting factors.</title>
        <authorList>
            <person name="Mohr E."/>
            <person name="Prakash N."/>
            <person name="Vieluf K."/>
            <person name="Fuhrmann C."/>
            <person name="Buck F."/>
            <person name="Richter D."/>
        </authorList>
    </citation>
    <scope>NUCLEOTIDE SEQUENCE [MRNA]</scope>
</reference>
<reference key="2">
    <citation type="journal article" date="2004" name="Genome Res.">
        <title>The status, quality, and expansion of the NIH full-length cDNA project: the Mammalian Gene Collection (MGC).</title>
        <authorList>
            <consortium name="The MGC Project Team"/>
        </authorList>
    </citation>
    <scope>NUCLEOTIDE SEQUENCE [LARGE SCALE MRNA]</scope>
    <source>
        <tissue>Lung</tissue>
    </source>
</reference>
<feature type="chain" id="PRO_0000081700" description="Polyadenylate-binding protein 1">
    <location>
        <begin position="1"/>
        <end position="636"/>
    </location>
</feature>
<feature type="domain" description="RRM 1" evidence="4">
    <location>
        <begin position="11"/>
        <end position="89"/>
    </location>
</feature>
<feature type="domain" description="RRM 2" evidence="4">
    <location>
        <begin position="99"/>
        <end position="175"/>
    </location>
</feature>
<feature type="domain" description="RRM 3" evidence="4">
    <location>
        <begin position="191"/>
        <end position="268"/>
    </location>
</feature>
<feature type="domain" description="RRM 4" evidence="4">
    <location>
        <begin position="294"/>
        <end position="370"/>
    </location>
</feature>
<feature type="domain" description="PABC" evidence="5">
    <location>
        <begin position="542"/>
        <end position="619"/>
    </location>
</feature>
<feature type="region of interest" description="UNR-binding" evidence="1">
    <location>
        <begin position="166"/>
        <end position="289"/>
    </location>
</feature>
<feature type="modified residue" description="N-acetylmethionine" evidence="2">
    <location>
        <position position="1"/>
    </location>
</feature>
<feature type="modified residue" description="N6-methyllysine" evidence="2">
    <location>
        <position position="299"/>
    </location>
</feature>
<feature type="modified residue" description="Phosphoserine" evidence="2">
    <location>
        <position position="315"/>
    </location>
</feature>
<feature type="modified residue" description="Phosphothreonine" evidence="2">
    <location>
        <position position="319"/>
    </location>
</feature>
<feature type="modified residue" description="Omega-N-methylarginine" evidence="2">
    <location>
        <position position="385"/>
    </location>
</feature>
<feature type="modified residue" description="Omega-N-methylarginine" evidence="2">
    <location>
        <position position="419"/>
    </location>
</feature>
<feature type="modified residue" description="Omega-N-methylarginine" evidence="2">
    <location>
        <position position="432"/>
    </location>
</feature>
<feature type="modified residue" description="Omega-N-methylarginine" evidence="2">
    <location>
        <position position="436"/>
    </location>
</feature>
<feature type="modified residue" description="Omega-N-methylated arginine; by CARM1" evidence="2">
    <location>
        <position position="455"/>
    </location>
</feature>
<feature type="modified residue" description="Omega-N-methylated arginine; by CARM1" evidence="2">
    <location>
        <position position="460"/>
    </location>
</feature>
<feature type="modified residue" description="Omega-N-methylarginine" evidence="3">
    <location>
        <position position="475"/>
    </location>
</feature>
<feature type="modified residue" description="Omega-N-methylarginine" evidence="2">
    <location>
        <position position="481"/>
    </location>
</feature>
<feature type="modified residue" description="Asymmetric dimethylarginine; alternate" evidence="2">
    <location>
        <position position="493"/>
    </location>
</feature>
<feature type="modified residue" description="Dimethylated arginine; alternate" evidence="2">
    <location>
        <position position="493"/>
    </location>
</feature>
<feature type="modified residue" description="Omega-N-methylarginine; alternate" evidence="2">
    <location>
        <position position="493"/>
    </location>
</feature>
<feature type="modified residue" description="Omega-N-methylarginine" evidence="2">
    <location>
        <position position="506"/>
    </location>
</feature>
<feature type="modified residue" description="N6-acetyllysine" evidence="2">
    <location>
        <position position="512"/>
    </location>
</feature>
<feature type="modified residue" description="Omega-N-methylarginine" evidence="2">
    <location>
        <position position="518"/>
    </location>
</feature>
<gene>
    <name type="primary">Pabpc1</name>
    <name type="synonym">Pabp1</name>
</gene>
<protein>
    <recommendedName>
        <fullName>Polyadenylate-binding protein 1</fullName>
        <shortName>PABP-1</shortName>
        <shortName>Poly(A)-binding protein 1</shortName>
    </recommendedName>
</protein>
<sequence length="636" mass="70701">MNPSAPSYPMASLYVGDLHPDVTEAMLYEKFSPAGPILSIRVCRDMITRRSLGYAYVNFQQPADAERALDTMNFDVIKGKPVRIMWSQRDPSLRKSGVGNIFIKNLDKSIDNKALYDTFSAFGNILSCKVVCDENGSKGYGFVHFETQEAAERAIEKMNGMLLNDRKVFVGRFKSRKEREAELGARAKEFTNVYIKNFGEDMDDERLKELFGKFGPALSVKVMTDESGKSKGFGFVSFERHEDAQKAVDEMNGKELNGKQIYVGRAQKKVERQTELKRKFEQMKQDRITRYQGVNLYVKNLDDGIDDERLRKEFSPFGTITSAKVMMEGGRSKGFGFVCFSSPEEATKAVTEMNGRIVATKPLYVALAQRKEERQAHLTNQYMQRMASVRAVPNPVINPYQPAPPSGYFMAAIPQTQNRAAYYPPSQIAQLRPSPRWTAQGARPHPFQNMPGAIRPAAPRPPFSTMRPASSQVPRVMSTQRVANTSTQTMGPRPAAAATAATPAVRTVPQYKYAAGVRNPQQHLNAQPQVTMQQPAVHVQGQEPLTASMLASAPPQEQKQMLGERLFPLIQAMHPSLAGKITGMLLEIDNSELLHMLESPESLRSKVDEAVAVLQAHQAKEAAQKAVNSATGVPTV</sequence>
<name>PABP1_RAT</name>
<keyword id="KW-0007">Acetylation</keyword>
<keyword id="KW-0966">Cell projection</keyword>
<keyword id="KW-0963">Cytoplasm</keyword>
<keyword id="KW-0488">Methylation</keyword>
<keyword id="KW-0507">mRNA processing</keyword>
<keyword id="KW-0508">mRNA splicing</keyword>
<keyword id="KW-0866">Nonsense-mediated mRNA decay</keyword>
<keyword id="KW-0539">Nucleus</keyword>
<keyword id="KW-0597">Phosphoprotein</keyword>
<keyword id="KW-1185">Reference proteome</keyword>
<keyword id="KW-0677">Repeat</keyword>
<keyword id="KW-0694">RNA-binding</keyword>
<keyword id="KW-0747">Spliceosome</keyword>
<proteinExistence type="evidence at protein level"/>
<organism>
    <name type="scientific">Rattus norvegicus</name>
    <name type="common">Rat</name>
    <dbReference type="NCBI Taxonomy" id="10116"/>
    <lineage>
        <taxon>Eukaryota</taxon>
        <taxon>Metazoa</taxon>
        <taxon>Chordata</taxon>
        <taxon>Craniata</taxon>
        <taxon>Vertebrata</taxon>
        <taxon>Euteleostomi</taxon>
        <taxon>Mammalia</taxon>
        <taxon>Eutheria</taxon>
        <taxon>Euarchontoglires</taxon>
        <taxon>Glires</taxon>
        <taxon>Rodentia</taxon>
        <taxon>Myomorpha</taxon>
        <taxon>Muroidea</taxon>
        <taxon>Muridae</taxon>
        <taxon>Murinae</taxon>
        <taxon>Rattus</taxon>
    </lineage>
</organism>